<organism>
    <name type="scientific">Allorhizobium ampelinum (strain ATCC BAA-846 / DSM 112012 / S4)</name>
    <name type="common">Agrobacterium vitis (strain S4)</name>
    <dbReference type="NCBI Taxonomy" id="311402"/>
    <lineage>
        <taxon>Bacteria</taxon>
        <taxon>Pseudomonadati</taxon>
        <taxon>Pseudomonadota</taxon>
        <taxon>Alphaproteobacteria</taxon>
        <taxon>Hyphomicrobiales</taxon>
        <taxon>Rhizobiaceae</taxon>
        <taxon>Rhizobium/Agrobacterium group</taxon>
        <taxon>Allorhizobium</taxon>
        <taxon>Allorhizobium ampelinum</taxon>
    </lineage>
</organism>
<dbReference type="EC" id="2.5.1.145" evidence="1"/>
<dbReference type="EMBL" id="CP000633">
    <property type="protein sequence ID" value="ACM37272.1"/>
    <property type="molecule type" value="Genomic_DNA"/>
</dbReference>
<dbReference type="RefSeq" id="WP_015916691.1">
    <property type="nucleotide sequence ID" value="NC_011989.1"/>
</dbReference>
<dbReference type="SMR" id="B9JZ26"/>
<dbReference type="STRING" id="311402.Avi_3171"/>
<dbReference type="KEGG" id="avi:Avi_3171"/>
<dbReference type="eggNOG" id="COG0682">
    <property type="taxonomic scope" value="Bacteria"/>
</dbReference>
<dbReference type="HOGENOM" id="CLU_013386_1_0_5"/>
<dbReference type="UniPathway" id="UPA00664"/>
<dbReference type="Proteomes" id="UP000001596">
    <property type="component" value="Chromosome 1"/>
</dbReference>
<dbReference type="GO" id="GO:0005886">
    <property type="term" value="C:plasma membrane"/>
    <property type="evidence" value="ECO:0007669"/>
    <property type="project" value="UniProtKB-SubCell"/>
</dbReference>
<dbReference type="GO" id="GO:0008961">
    <property type="term" value="F:phosphatidylglycerol-prolipoprotein diacylglyceryl transferase activity"/>
    <property type="evidence" value="ECO:0007669"/>
    <property type="project" value="UniProtKB-UniRule"/>
</dbReference>
<dbReference type="GO" id="GO:0042158">
    <property type="term" value="P:lipoprotein biosynthetic process"/>
    <property type="evidence" value="ECO:0007669"/>
    <property type="project" value="UniProtKB-UniRule"/>
</dbReference>
<dbReference type="HAMAP" id="MF_01147">
    <property type="entry name" value="Lgt"/>
    <property type="match status" value="1"/>
</dbReference>
<dbReference type="InterPro" id="IPR001640">
    <property type="entry name" value="Lgt"/>
</dbReference>
<dbReference type="NCBIfam" id="TIGR00544">
    <property type="entry name" value="lgt"/>
    <property type="match status" value="1"/>
</dbReference>
<dbReference type="PANTHER" id="PTHR30589:SF0">
    <property type="entry name" value="PHOSPHATIDYLGLYCEROL--PROLIPOPROTEIN DIACYLGLYCERYL TRANSFERASE"/>
    <property type="match status" value="1"/>
</dbReference>
<dbReference type="PANTHER" id="PTHR30589">
    <property type="entry name" value="PROLIPOPROTEIN DIACYLGLYCERYL TRANSFERASE"/>
    <property type="match status" value="1"/>
</dbReference>
<dbReference type="Pfam" id="PF01790">
    <property type="entry name" value="LGT"/>
    <property type="match status" value="1"/>
</dbReference>
<dbReference type="PROSITE" id="PS01311">
    <property type="entry name" value="LGT"/>
    <property type="match status" value="1"/>
</dbReference>
<accession>B9JZ26</accession>
<protein>
    <recommendedName>
        <fullName evidence="1">Phosphatidylglycerol--prolipoprotein diacylglyceryl transferase</fullName>
        <ecNumber evidence="1">2.5.1.145</ecNumber>
    </recommendedName>
</protein>
<gene>
    <name evidence="1" type="primary">lgt</name>
    <name type="ordered locus">Avi_3171</name>
</gene>
<evidence type="ECO:0000255" key="1">
    <source>
        <dbReference type="HAMAP-Rule" id="MF_01147"/>
    </source>
</evidence>
<proteinExistence type="inferred from homology"/>
<name>LGT_ALLAM</name>
<keyword id="KW-0997">Cell inner membrane</keyword>
<keyword id="KW-1003">Cell membrane</keyword>
<keyword id="KW-0472">Membrane</keyword>
<keyword id="KW-1185">Reference proteome</keyword>
<keyword id="KW-0808">Transferase</keyword>
<keyword id="KW-0812">Transmembrane</keyword>
<keyword id="KW-1133">Transmembrane helix</keyword>
<feature type="chain" id="PRO_1000164120" description="Phosphatidylglycerol--prolipoprotein diacylglyceryl transferase">
    <location>
        <begin position="1"/>
        <end position="287"/>
    </location>
</feature>
<feature type="transmembrane region" description="Helical" evidence="1">
    <location>
        <begin position="26"/>
        <end position="46"/>
    </location>
</feature>
<feature type="transmembrane region" description="Helical" evidence="1">
    <location>
        <begin position="71"/>
        <end position="91"/>
    </location>
</feature>
<feature type="transmembrane region" description="Helical" evidence="1">
    <location>
        <begin position="106"/>
        <end position="126"/>
    </location>
</feature>
<feature type="transmembrane region" description="Helical" evidence="1">
    <location>
        <begin position="132"/>
        <end position="152"/>
    </location>
</feature>
<feature type="transmembrane region" description="Helical" evidence="1">
    <location>
        <begin position="187"/>
        <end position="207"/>
    </location>
</feature>
<feature type="transmembrane region" description="Helical" evidence="1">
    <location>
        <begin position="217"/>
        <end position="237"/>
    </location>
</feature>
<feature type="transmembrane region" description="Helical" evidence="1">
    <location>
        <begin position="251"/>
        <end position="271"/>
    </location>
</feature>
<feature type="binding site" evidence="1">
    <location>
        <position position="154"/>
    </location>
    <ligand>
        <name>a 1,2-diacyl-sn-glycero-3-phospho-(1'-sn-glycerol)</name>
        <dbReference type="ChEBI" id="CHEBI:64716"/>
    </ligand>
</feature>
<sequence>MNTVASLFAILPYPQIDPIALSIGPVAIRWYGLAYVTGILIGWWLARRMIANLSLWPGNTTPITEKHLDDFLVWAAIGIVLGGRIGYILFYDLQPVLDNPLVALEIWRGGMSFHGGLTGATLAMIVFARRNGLPVWMLFDLVACVAPIGLFFGRIANFINGELWGRVSDVAWAMQFPTGGPFTRHPSQLYEAALEGLVLFVLLQVLARQFHALKTSGVISGVFICGYALARIFVEFFREPDEQLGYLVGGWLTMGMLLSLPMLALGLWAIWRARRAGRSQEPSGLKG</sequence>
<reference key="1">
    <citation type="journal article" date="2009" name="J. Bacteriol.">
        <title>Genome sequences of three Agrobacterium biovars help elucidate the evolution of multichromosome genomes in bacteria.</title>
        <authorList>
            <person name="Slater S.C."/>
            <person name="Goldman B.S."/>
            <person name="Goodner B."/>
            <person name="Setubal J.C."/>
            <person name="Farrand S.K."/>
            <person name="Nester E.W."/>
            <person name="Burr T.J."/>
            <person name="Banta L."/>
            <person name="Dickerman A.W."/>
            <person name="Paulsen I."/>
            <person name="Otten L."/>
            <person name="Suen G."/>
            <person name="Welch R."/>
            <person name="Almeida N.F."/>
            <person name="Arnold F."/>
            <person name="Burton O.T."/>
            <person name="Du Z."/>
            <person name="Ewing A."/>
            <person name="Godsy E."/>
            <person name="Heisel S."/>
            <person name="Houmiel K.L."/>
            <person name="Jhaveri J."/>
            <person name="Lu J."/>
            <person name="Miller N.M."/>
            <person name="Norton S."/>
            <person name="Chen Q."/>
            <person name="Phoolcharoen W."/>
            <person name="Ohlin V."/>
            <person name="Ondrusek D."/>
            <person name="Pride N."/>
            <person name="Stricklin S.L."/>
            <person name="Sun J."/>
            <person name="Wheeler C."/>
            <person name="Wilson L."/>
            <person name="Zhu H."/>
            <person name="Wood D.W."/>
        </authorList>
    </citation>
    <scope>NUCLEOTIDE SEQUENCE [LARGE SCALE GENOMIC DNA]</scope>
    <source>
        <strain>ATCC BAA-846 / DSM 112012 / S4</strain>
    </source>
</reference>
<comment type="function">
    <text evidence="1">Catalyzes the transfer of the diacylglyceryl group from phosphatidylglycerol to the sulfhydryl group of the N-terminal cysteine of a prolipoprotein, the first step in the formation of mature lipoproteins.</text>
</comment>
<comment type="catalytic activity">
    <reaction evidence="1">
        <text>L-cysteinyl-[prolipoprotein] + a 1,2-diacyl-sn-glycero-3-phospho-(1'-sn-glycerol) = an S-1,2-diacyl-sn-glyceryl-L-cysteinyl-[prolipoprotein] + sn-glycerol 1-phosphate + H(+)</text>
        <dbReference type="Rhea" id="RHEA:56712"/>
        <dbReference type="Rhea" id="RHEA-COMP:14679"/>
        <dbReference type="Rhea" id="RHEA-COMP:14680"/>
        <dbReference type="ChEBI" id="CHEBI:15378"/>
        <dbReference type="ChEBI" id="CHEBI:29950"/>
        <dbReference type="ChEBI" id="CHEBI:57685"/>
        <dbReference type="ChEBI" id="CHEBI:64716"/>
        <dbReference type="ChEBI" id="CHEBI:140658"/>
        <dbReference type="EC" id="2.5.1.145"/>
    </reaction>
</comment>
<comment type="pathway">
    <text evidence="1">Protein modification; lipoprotein biosynthesis (diacylglyceryl transfer).</text>
</comment>
<comment type="subcellular location">
    <subcellularLocation>
        <location evidence="1">Cell inner membrane</location>
        <topology evidence="1">Multi-pass membrane protein</topology>
    </subcellularLocation>
</comment>
<comment type="similarity">
    <text evidence="1">Belongs to the Lgt family.</text>
</comment>